<organism>
    <name type="scientific">Streptococcus pneumoniae serotype 4 (strain ATCC BAA-334 / TIGR4)</name>
    <dbReference type="NCBI Taxonomy" id="170187"/>
    <lineage>
        <taxon>Bacteria</taxon>
        <taxon>Bacillati</taxon>
        <taxon>Bacillota</taxon>
        <taxon>Bacilli</taxon>
        <taxon>Lactobacillales</taxon>
        <taxon>Streptococcaceae</taxon>
        <taxon>Streptococcus</taxon>
    </lineage>
</organism>
<feature type="signal peptide">
    <location>
        <begin position="1"/>
        <end position="29"/>
    </location>
</feature>
<feature type="chain" id="PRO_0000012038" description="Sialidase B">
    <location>
        <begin position="30"/>
        <end position="697"/>
    </location>
</feature>
<feature type="repeat" description="BNR 1">
    <location>
        <begin position="280"/>
        <end position="291"/>
    </location>
</feature>
<feature type="repeat" description="BNR 2">
    <location>
        <begin position="462"/>
        <end position="473"/>
    </location>
</feature>
<feature type="repeat" description="BNR 3">
    <location>
        <begin position="517"/>
        <end position="528"/>
    </location>
</feature>
<feature type="repeat" description="BNR 4">
    <location>
        <begin position="566"/>
        <end position="577"/>
    </location>
</feature>
<feature type="active site" description="Proton acceptor" evidence="1">
    <location>
        <position position="270"/>
    </location>
</feature>
<feature type="active site" evidence="2">
    <location>
        <position position="541"/>
    </location>
</feature>
<feature type="active site" description="Nucleophile" evidence="1">
    <location>
        <position position="653"/>
    </location>
</feature>
<feature type="binding site" evidence="1">
    <location>
        <position position="245"/>
    </location>
    <ligand>
        <name>substrate</name>
    </ligand>
</feature>
<feature type="binding site" evidence="1">
    <location>
        <position position="557"/>
    </location>
    <ligand>
        <name>substrate</name>
    </ligand>
</feature>
<feature type="binding site" evidence="1">
    <location>
        <position position="619"/>
    </location>
    <ligand>
        <name>substrate</name>
    </ligand>
</feature>
<feature type="sequence conflict" description="In Ref. 1; AAC44396." evidence="3" ref="1">
    <original>K</original>
    <variation>E</variation>
    <location>
        <position position="121"/>
    </location>
</feature>
<feature type="sequence conflict" description="In Ref. 1; AAC44396." evidence="3" ref="1">
    <original>D</original>
    <variation>G</variation>
    <location>
        <position position="206"/>
    </location>
</feature>
<feature type="sequence conflict" description="In Ref. 1; AAC44396." evidence="3" ref="1">
    <original>T</original>
    <variation>N</variation>
    <location>
        <position position="222"/>
    </location>
</feature>
<feature type="sequence conflict" description="In Ref. 1; AAC44396." evidence="3" ref="1">
    <original>N</original>
    <variation>D</variation>
    <location>
        <position position="393"/>
    </location>
</feature>
<feature type="sequence conflict" description="In Ref. 1; AAC44396." evidence="3" ref="1">
    <original>K</original>
    <variation>R</variation>
    <location>
        <position position="639"/>
    </location>
</feature>
<feature type="strand" evidence="9">
    <location>
        <begin position="42"/>
        <end position="53"/>
    </location>
</feature>
<feature type="helix" evidence="9">
    <location>
        <begin position="58"/>
        <end position="61"/>
    </location>
</feature>
<feature type="turn" evidence="9">
    <location>
        <begin position="62"/>
        <end position="64"/>
    </location>
</feature>
<feature type="strand" evidence="9">
    <location>
        <begin position="70"/>
        <end position="77"/>
    </location>
</feature>
<feature type="strand" evidence="9">
    <location>
        <begin position="83"/>
        <end position="91"/>
    </location>
</feature>
<feature type="strand" evidence="9">
    <location>
        <begin position="101"/>
        <end position="107"/>
    </location>
</feature>
<feature type="strand" evidence="9">
    <location>
        <begin position="112"/>
        <end position="118"/>
    </location>
</feature>
<feature type="turn" evidence="9">
    <location>
        <begin position="119"/>
        <end position="122"/>
    </location>
</feature>
<feature type="strand" evidence="9">
    <location>
        <begin position="123"/>
        <end position="131"/>
    </location>
</feature>
<feature type="strand" evidence="4">
    <location>
        <begin position="136"/>
        <end position="141"/>
    </location>
</feature>
<feature type="strand" evidence="9">
    <location>
        <begin position="144"/>
        <end position="151"/>
    </location>
</feature>
<feature type="turn" evidence="9">
    <location>
        <begin position="152"/>
        <end position="155"/>
    </location>
</feature>
<feature type="strand" evidence="9">
    <location>
        <begin position="156"/>
        <end position="161"/>
    </location>
</feature>
<feature type="strand" evidence="9">
    <location>
        <begin position="164"/>
        <end position="170"/>
    </location>
</feature>
<feature type="helix" evidence="9">
    <location>
        <begin position="177"/>
        <end position="179"/>
    </location>
</feature>
<feature type="strand" evidence="9">
    <location>
        <begin position="185"/>
        <end position="193"/>
    </location>
</feature>
<feature type="strand" evidence="9">
    <location>
        <begin position="196"/>
        <end position="199"/>
    </location>
</feature>
<feature type="strand" evidence="9">
    <location>
        <begin position="202"/>
        <end position="213"/>
    </location>
</feature>
<feature type="helix" evidence="9">
    <location>
        <begin position="217"/>
        <end position="220"/>
    </location>
</feature>
<feature type="strand" evidence="9">
    <location>
        <begin position="242"/>
        <end position="245"/>
    </location>
</feature>
<feature type="strand" evidence="9">
    <location>
        <begin position="257"/>
        <end position="266"/>
    </location>
</feature>
<feature type="strand" evidence="9">
    <location>
        <begin position="271"/>
        <end position="273"/>
    </location>
</feature>
<feature type="strand" evidence="9">
    <location>
        <begin position="275"/>
        <end position="284"/>
    </location>
</feature>
<feature type="strand" evidence="9">
    <location>
        <begin position="293"/>
        <end position="296"/>
    </location>
</feature>
<feature type="turn" evidence="9">
    <location>
        <begin position="312"/>
        <end position="316"/>
    </location>
</feature>
<feature type="strand" evidence="9">
    <location>
        <begin position="324"/>
        <end position="332"/>
    </location>
</feature>
<feature type="turn" evidence="9">
    <location>
        <begin position="334"/>
        <end position="336"/>
    </location>
</feature>
<feature type="strand" evidence="9">
    <location>
        <begin position="339"/>
        <end position="346"/>
    </location>
</feature>
<feature type="turn" evidence="9">
    <location>
        <begin position="352"/>
        <end position="354"/>
    </location>
</feature>
<feature type="strand" evidence="9">
    <location>
        <begin position="361"/>
        <end position="365"/>
    </location>
</feature>
<feature type="strand" evidence="9">
    <location>
        <begin position="368"/>
        <end position="375"/>
    </location>
</feature>
<feature type="strand" evidence="9">
    <location>
        <begin position="383"/>
        <end position="385"/>
    </location>
</feature>
<feature type="helix" evidence="9">
    <location>
        <begin position="387"/>
        <end position="389"/>
    </location>
</feature>
<feature type="strand" evidence="9">
    <location>
        <begin position="390"/>
        <end position="393"/>
    </location>
</feature>
<feature type="turn" evidence="9">
    <location>
        <begin position="394"/>
        <end position="397"/>
    </location>
</feature>
<feature type="strand" evidence="9">
    <location>
        <begin position="398"/>
        <end position="404"/>
    </location>
</feature>
<feature type="strand" evidence="9">
    <location>
        <begin position="408"/>
        <end position="412"/>
    </location>
</feature>
<feature type="strand" evidence="9">
    <location>
        <begin position="418"/>
        <end position="425"/>
    </location>
</feature>
<feature type="strand" evidence="9">
    <location>
        <begin position="432"/>
        <end position="441"/>
    </location>
</feature>
<feature type="strand" evidence="6">
    <location>
        <begin position="446"/>
        <end position="448"/>
    </location>
</feature>
<feature type="strand" evidence="9">
    <location>
        <begin position="450"/>
        <end position="452"/>
    </location>
</feature>
<feature type="strand" evidence="9">
    <location>
        <begin position="458"/>
        <end position="466"/>
    </location>
</feature>
<feature type="strand" evidence="5">
    <location>
        <begin position="467"/>
        <end position="469"/>
    </location>
</feature>
<feature type="strand" evidence="7">
    <location>
        <begin position="483"/>
        <end position="485"/>
    </location>
</feature>
<feature type="strand" evidence="9">
    <location>
        <begin position="492"/>
        <end position="494"/>
    </location>
</feature>
<feature type="strand" evidence="8">
    <location>
        <begin position="499"/>
        <end position="502"/>
    </location>
</feature>
<feature type="strand" evidence="9">
    <location>
        <begin position="504"/>
        <end position="510"/>
    </location>
</feature>
<feature type="strand" evidence="9">
    <location>
        <begin position="513"/>
        <end position="521"/>
    </location>
</feature>
<feature type="strand" evidence="9">
    <location>
        <begin position="527"/>
        <end position="532"/>
    </location>
</feature>
<feature type="strand" evidence="9">
    <location>
        <begin position="542"/>
        <end position="548"/>
    </location>
</feature>
<feature type="strand" evidence="9">
    <location>
        <begin position="551"/>
        <end position="556"/>
    </location>
</feature>
<feature type="strand" evidence="9">
    <location>
        <begin position="559"/>
        <end position="562"/>
    </location>
</feature>
<feature type="strand" evidence="9">
    <location>
        <begin position="564"/>
        <end position="570"/>
    </location>
</feature>
<feature type="strand" evidence="5">
    <location>
        <begin position="573"/>
        <end position="575"/>
    </location>
</feature>
<feature type="strand" evidence="9">
    <location>
        <begin position="594"/>
        <end position="597"/>
    </location>
</feature>
<feature type="strand" evidence="9">
    <location>
        <begin position="607"/>
        <end position="613"/>
    </location>
</feature>
<feature type="strand" evidence="9">
    <location>
        <begin position="616"/>
        <end position="620"/>
    </location>
</feature>
<feature type="strand" evidence="9">
    <location>
        <begin position="622"/>
        <end position="629"/>
    </location>
</feature>
<feature type="turn" evidence="9">
    <location>
        <begin position="631"/>
        <end position="633"/>
    </location>
</feature>
<feature type="strand" evidence="9">
    <location>
        <begin position="636"/>
        <end position="645"/>
    </location>
</feature>
<feature type="strand" evidence="9">
    <location>
        <begin position="653"/>
        <end position="658"/>
    </location>
</feature>
<feature type="strand" evidence="9">
    <location>
        <begin position="664"/>
        <end position="669"/>
    </location>
</feature>
<feature type="strand" evidence="4">
    <location>
        <begin position="676"/>
        <end position="678"/>
    </location>
</feature>
<feature type="strand" evidence="9">
    <location>
        <begin position="685"/>
        <end position="690"/>
    </location>
</feature>
<feature type="helix" evidence="9">
    <location>
        <begin position="692"/>
        <end position="695"/>
    </location>
</feature>
<dbReference type="EC" id="3.2.1.18"/>
<dbReference type="EMBL" id="U43526">
    <property type="protein sequence ID" value="AAC44396.1"/>
    <property type="molecule type" value="Genomic_DNA"/>
</dbReference>
<dbReference type="EMBL" id="AE005672">
    <property type="protein sequence ID" value="AAK75766.1"/>
    <property type="molecule type" value="Genomic_DNA"/>
</dbReference>
<dbReference type="PIR" id="E95196">
    <property type="entry name" value="E95196"/>
</dbReference>
<dbReference type="RefSeq" id="WP_001042179.1">
    <property type="nucleotide sequence ID" value="NZ_CP155539.1"/>
</dbReference>
<dbReference type="PDB" id="2JKB">
    <property type="method" value="X-ray"/>
    <property type="resolution" value="1.54 A"/>
    <property type="chains" value="A=30-697"/>
</dbReference>
<dbReference type="PDB" id="2VW0">
    <property type="method" value="X-ray"/>
    <property type="resolution" value="2.30 A"/>
    <property type="chains" value="A=1-697"/>
</dbReference>
<dbReference type="PDB" id="2VW1">
    <property type="method" value="X-ray"/>
    <property type="resolution" value="2.39 A"/>
    <property type="chains" value="A=1-697"/>
</dbReference>
<dbReference type="PDB" id="2VW2">
    <property type="method" value="X-ray"/>
    <property type="resolution" value="1.70 A"/>
    <property type="chains" value="A=1-697"/>
</dbReference>
<dbReference type="PDB" id="4FOQ">
    <property type="method" value="X-ray"/>
    <property type="resolution" value="1.99 A"/>
    <property type="chains" value="A=1-697"/>
</dbReference>
<dbReference type="PDB" id="4FOV">
    <property type="method" value="X-ray"/>
    <property type="resolution" value="2.29 A"/>
    <property type="chains" value="A=1-697"/>
</dbReference>
<dbReference type="PDB" id="4FOW">
    <property type="method" value="X-ray"/>
    <property type="resolution" value="2.10 A"/>
    <property type="chains" value="A=1-697"/>
</dbReference>
<dbReference type="PDB" id="4FOY">
    <property type="method" value="X-ray"/>
    <property type="resolution" value="1.84 A"/>
    <property type="chains" value="A=1-697"/>
</dbReference>
<dbReference type="PDB" id="4FP2">
    <property type="method" value="X-ray"/>
    <property type="resolution" value="2.05 A"/>
    <property type="chains" value="A=1-697"/>
</dbReference>
<dbReference type="PDB" id="4FP3">
    <property type="method" value="X-ray"/>
    <property type="resolution" value="2.74 A"/>
    <property type="chains" value="A=1-697"/>
</dbReference>
<dbReference type="PDB" id="4FPC">
    <property type="method" value="X-ray"/>
    <property type="resolution" value="2.32 A"/>
    <property type="chains" value="A=1-697"/>
</dbReference>
<dbReference type="PDB" id="4FPE">
    <property type="method" value="X-ray"/>
    <property type="resolution" value="2.18 A"/>
    <property type="chains" value="A=1-697"/>
</dbReference>
<dbReference type="PDB" id="4FPF">
    <property type="method" value="X-ray"/>
    <property type="resolution" value="2.23 A"/>
    <property type="chains" value="A=1-697"/>
</dbReference>
<dbReference type="PDB" id="4FPG">
    <property type="method" value="X-ray"/>
    <property type="resolution" value="2.58 A"/>
    <property type="chains" value="A=1-697"/>
</dbReference>
<dbReference type="PDB" id="4FPH">
    <property type="method" value="X-ray"/>
    <property type="resolution" value="1.94 A"/>
    <property type="chains" value="A=1-697"/>
</dbReference>
<dbReference type="PDB" id="4FPJ">
    <property type="method" value="X-ray"/>
    <property type="resolution" value="1.98 A"/>
    <property type="chains" value="A=1-697"/>
</dbReference>
<dbReference type="PDB" id="4FPK">
    <property type="method" value="X-ray"/>
    <property type="resolution" value="2.40 A"/>
    <property type="chains" value="A=1-697"/>
</dbReference>
<dbReference type="PDB" id="4FPL">
    <property type="method" value="X-ray"/>
    <property type="resolution" value="2.10 A"/>
    <property type="chains" value="A=1-697"/>
</dbReference>
<dbReference type="PDB" id="4FPO">
    <property type="method" value="X-ray"/>
    <property type="resolution" value="2.59 A"/>
    <property type="chains" value="B=1-697"/>
</dbReference>
<dbReference type="PDB" id="4FPY">
    <property type="method" value="X-ray"/>
    <property type="resolution" value="2.18 A"/>
    <property type="chains" value="A=1-697"/>
</dbReference>
<dbReference type="PDB" id="4FQ4">
    <property type="method" value="X-ray"/>
    <property type="resolution" value="1.84 A"/>
    <property type="chains" value="A=1-697"/>
</dbReference>
<dbReference type="PDB" id="4XE9">
    <property type="method" value="X-ray"/>
    <property type="resolution" value="1.84 A"/>
    <property type="chains" value="A=39-696"/>
</dbReference>
<dbReference type="PDB" id="4XHB">
    <property type="method" value="X-ray"/>
    <property type="resolution" value="1.88 A"/>
    <property type="chains" value="A=39-696"/>
</dbReference>
<dbReference type="PDB" id="4XHX">
    <property type="method" value="X-ray"/>
    <property type="resolution" value="2.10 A"/>
    <property type="chains" value="A=39-696"/>
</dbReference>
<dbReference type="PDB" id="4XIK">
    <property type="method" value="X-ray"/>
    <property type="resolution" value="1.91 A"/>
    <property type="chains" value="A=39-696"/>
</dbReference>
<dbReference type="PDB" id="4XIL">
    <property type="method" value="X-ray"/>
    <property type="resolution" value="1.90 A"/>
    <property type="chains" value="A=39-696"/>
</dbReference>
<dbReference type="PDB" id="4XIO">
    <property type="method" value="X-ray"/>
    <property type="resolution" value="1.80 A"/>
    <property type="chains" value="A=39-696"/>
</dbReference>
<dbReference type="PDB" id="4XJ8">
    <property type="method" value="X-ray"/>
    <property type="resolution" value="2.75 A"/>
    <property type="chains" value="A=39-696"/>
</dbReference>
<dbReference type="PDB" id="4XJ9">
    <property type="method" value="X-ray"/>
    <property type="resolution" value="1.98 A"/>
    <property type="chains" value="A=39-696"/>
</dbReference>
<dbReference type="PDB" id="4XJA">
    <property type="method" value="X-ray"/>
    <property type="resolution" value="1.98 A"/>
    <property type="chains" value="A=39-696"/>
</dbReference>
<dbReference type="PDB" id="4XJU">
    <property type="method" value="X-ray"/>
    <property type="resolution" value="1.94 A"/>
    <property type="chains" value="A=39-696"/>
</dbReference>
<dbReference type="PDB" id="4XJW">
    <property type="method" value="X-ray"/>
    <property type="resolution" value="1.53 A"/>
    <property type="chains" value="A=39-696"/>
</dbReference>
<dbReference type="PDB" id="4XJZ">
    <property type="method" value="X-ray"/>
    <property type="resolution" value="1.56 A"/>
    <property type="chains" value="A=39-696"/>
</dbReference>
<dbReference type="PDB" id="4XMA">
    <property type="method" value="X-ray"/>
    <property type="resolution" value="2.09 A"/>
    <property type="chains" value="A=39-696"/>
</dbReference>
<dbReference type="PDB" id="4XMI">
    <property type="method" value="X-ray"/>
    <property type="resolution" value="1.97 A"/>
    <property type="chains" value="A=39-696"/>
</dbReference>
<dbReference type="PDB" id="4XOG">
    <property type="method" value="X-ray"/>
    <property type="resolution" value="2.09 A"/>
    <property type="chains" value="A=37-694"/>
</dbReference>
<dbReference type="PDB" id="4XYX">
    <property type="method" value="X-ray"/>
    <property type="resolution" value="2.10 A"/>
    <property type="chains" value="A=40-697"/>
</dbReference>
<dbReference type="PDBsum" id="2JKB"/>
<dbReference type="PDBsum" id="2VW0"/>
<dbReference type="PDBsum" id="2VW1"/>
<dbReference type="PDBsum" id="2VW2"/>
<dbReference type="PDBsum" id="4FOQ"/>
<dbReference type="PDBsum" id="4FOV"/>
<dbReference type="PDBsum" id="4FOW"/>
<dbReference type="PDBsum" id="4FOY"/>
<dbReference type="PDBsum" id="4FP2"/>
<dbReference type="PDBsum" id="4FP3"/>
<dbReference type="PDBsum" id="4FPC"/>
<dbReference type="PDBsum" id="4FPE"/>
<dbReference type="PDBsum" id="4FPF"/>
<dbReference type="PDBsum" id="4FPG"/>
<dbReference type="PDBsum" id="4FPH"/>
<dbReference type="PDBsum" id="4FPJ"/>
<dbReference type="PDBsum" id="4FPK"/>
<dbReference type="PDBsum" id="4FPL"/>
<dbReference type="PDBsum" id="4FPO"/>
<dbReference type="PDBsum" id="4FPY"/>
<dbReference type="PDBsum" id="4FQ4"/>
<dbReference type="PDBsum" id="4XE9"/>
<dbReference type="PDBsum" id="4XHB"/>
<dbReference type="PDBsum" id="4XHX"/>
<dbReference type="PDBsum" id="4XIK"/>
<dbReference type="PDBsum" id="4XIL"/>
<dbReference type="PDBsum" id="4XIO"/>
<dbReference type="PDBsum" id="4XJ8"/>
<dbReference type="PDBsum" id="4XJ9"/>
<dbReference type="PDBsum" id="4XJA"/>
<dbReference type="PDBsum" id="4XJU"/>
<dbReference type="PDBsum" id="4XJW"/>
<dbReference type="PDBsum" id="4XJZ"/>
<dbReference type="PDBsum" id="4XMA"/>
<dbReference type="PDBsum" id="4XMI"/>
<dbReference type="PDBsum" id="4XOG"/>
<dbReference type="PDBsum" id="4XYX"/>
<dbReference type="SMR" id="Q54727"/>
<dbReference type="ChEMBL" id="CHEMBL4295604"/>
<dbReference type="CAZy" id="CBM40">
    <property type="family name" value="Carbohydrate-Binding Module Family 40"/>
</dbReference>
<dbReference type="CAZy" id="GH33">
    <property type="family name" value="Glycoside Hydrolase Family 33"/>
</dbReference>
<dbReference type="PaxDb" id="170187-SP_1687"/>
<dbReference type="EnsemblBacteria" id="AAK75766">
    <property type="protein sequence ID" value="AAK75766"/>
    <property type="gene ID" value="SP_1687"/>
</dbReference>
<dbReference type="KEGG" id="spn:SP_1687"/>
<dbReference type="eggNOG" id="COG4409">
    <property type="taxonomic scope" value="Bacteria"/>
</dbReference>
<dbReference type="BioCyc" id="SPNE170187:G1FZB-1708-MONOMER"/>
<dbReference type="BRENDA" id="3.2.1.18">
    <property type="organism ID" value="1960"/>
</dbReference>
<dbReference type="SABIO-RK" id="Q54727"/>
<dbReference type="EvolutionaryTrace" id="Q54727"/>
<dbReference type="PRO" id="PR:Q54727"/>
<dbReference type="Proteomes" id="UP000000585">
    <property type="component" value="Chromosome"/>
</dbReference>
<dbReference type="GO" id="GO:0005737">
    <property type="term" value="C:cytoplasm"/>
    <property type="evidence" value="ECO:0007669"/>
    <property type="project" value="TreeGrafter"/>
</dbReference>
<dbReference type="GO" id="GO:0043231">
    <property type="term" value="C:intracellular membrane-bounded organelle"/>
    <property type="evidence" value="ECO:0007669"/>
    <property type="project" value="TreeGrafter"/>
</dbReference>
<dbReference type="GO" id="GO:0016020">
    <property type="term" value="C:membrane"/>
    <property type="evidence" value="ECO:0007669"/>
    <property type="project" value="TreeGrafter"/>
</dbReference>
<dbReference type="GO" id="GO:0004308">
    <property type="term" value="F:exo-alpha-sialidase activity"/>
    <property type="evidence" value="ECO:0007669"/>
    <property type="project" value="UniProtKB-EC"/>
</dbReference>
<dbReference type="GO" id="GO:0006689">
    <property type="term" value="P:ganglioside catabolic process"/>
    <property type="evidence" value="ECO:0007669"/>
    <property type="project" value="TreeGrafter"/>
</dbReference>
<dbReference type="GO" id="GO:0009313">
    <property type="term" value="P:oligosaccharide catabolic process"/>
    <property type="evidence" value="ECO:0007669"/>
    <property type="project" value="TreeGrafter"/>
</dbReference>
<dbReference type="CDD" id="cd15482">
    <property type="entry name" value="Sialidase_non-viral"/>
    <property type="match status" value="1"/>
</dbReference>
<dbReference type="Gene3D" id="2.120.10.10">
    <property type="match status" value="1"/>
</dbReference>
<dbReference type="Gene3D" id="2.60.120.200">
    <property type="match status" value="1"/>
</dbReference>
<dbReference type="Gene3D" id="2.40.220.10">
    <property type="entry name" value="Intramolecular Trans-sialidase, Domain 3"/>
    <property type="match status" value="1"/>
</dbReference>
<dbReference type="InterPro" id="IPR002860">
    <property type="entry name" value="BNR_rpt"/>
</dbReference>
<dbReference type="InterPro" id="IPR013320">
    <property type="entry name" value="ConA-like_dom_sf"/>
</dbReference>
<dbReference type="InterPro" id="IPR004124">
    <property type="entry name" value="Glyco_hydro_33_N"/>
</dbReference>
<dbReference type="InterPro" id="IPR011040">
    <property type="entry name" value="Sialidase"/>
</dbReference>
<dbReference type="InterPro" id="IPR026856">
    <property type="entry name" value="Sialidase_fam"/>
</dbReference>
<dbReference type="InterPro" id="IPR036278">
    <property type="entry name" value="Sialidase_sf"/>
</dbReference>
<dbReference type="InterPro" id="IPR023364">
    <property type="entry name" value="Trans_sialidase_dom3"/>
</dbReference>
<dbReference type="PANTHER" id="PTHR10628:SF30">
    <property type="entry name" value="EXO-ALPHA-SIALIDASE"/>
    <property type="match status" value="1"/>
</dbReference>
<dbReference type="PANTHER" id="PTHR10628">
    <property type="entry name" value="SIALIDASE"/>
    <property type="match status" value="1"/>
</dbReference>
<dbReference type="Pfam" id="PF02012">
    <property type="entry name" value="BNR"/>
    <property type="match status" value="1"/>
</dbReference>
<dbReference type="Pfam" id="PF13088">
    <property type="entry name" value="BNR_2"/>
    <property type="match status" value="1"/>
</dbReference>
<dbReference type="Pfam" id="PF02973">
    <property type="entry name" value="Sialidase"/>
    <property type="match status" value="1"/>
</dbReference>
<dbReference type="SUPFAM" id="SSF49899">
    <property type="entry name" value="Concanavalin A-like lectins/glucanases"/>
    <property type="match status" value="1"/>
</dbReference>
<dbReference type="SUPFAM" id="SSF50939">
    <property type="entry name" value="Sialidases"/>
    <property type="match status" value="1"/>
</dbReference>
<comment type="catalytic activity">
    <reaction>
        <text>Hydrolysis of alpha-(2-&gt;3)-, alpha-(2-&gt;6)-, alpha-(2-&gt;8)- glycosidic linkages of terminal sialic acid residues in oligosaccharides, glycoproteins, glycolipids, colominic acid and synthetic substrates.</text>
        <dbReference type="EC" id="3.2.1.18"/>
    </reaction>
</comment>
<comment type="similarity">
    <text evidence="3">Belongs to the glycosyl hydrolase 33 family.</text>
</comment>
<accession>Q54727</accession>
<evidence type="ECO:0000250" key="1"/>
<evidence type="ECO:0000255" key="2"/>
<evidence type="ECO:0000305" key="3"/>
<evidence type="ECO:0007829" key="4">
    <source>
        <dbReference type="PDB" id="2VW1"/>
    </source>
</evidence>
<evidence type="ECO:0007829" key="5">
    <source>
        <dbReference type="PDB" id="4FP3"/>
    </source>
</evidence>
<evidence type="ECO:0007829" key="6">
    <source>
        <dbReference type="PDB" id="4FPG"/>
    </source>
</evidence>
<evidence type="ECO:0007829" key="7">
    <source>
        <dbReference type="PDB" id="4FPO"/>
    </source>
</evidence>
<evidence type="ECO:0007829" key="8">
    <source>
        <dbReference type="PDB" id="4XIL"/>
    </source>
</evidence>
<evidence type="ECO:0007829" key="9">
    <source>
        <dbReference type="PDB" id="4XJW"/>
    </source>
</evidence>
<sequence>MNKRGLYSKLGISVVGISLLMGVPTLIHANELNYGQLSISPIFQGGSYQLNNKSIDISSLLLDKLSGESQTVVMKFKADKPNSLQALFGLSNSKAGFKNNYFSIFMRDSGEIGVEIRDAQKGINYLFSRPASLWGKHKGQAVENTLVFVSDSKDKTYTMYVNGIEVFSETVDTFLPISNINGIDKATLGAVNREGKEHYLAKGSIDEISLFNKAISDQEVSTIPLSNPFQLIFQSGDSTQANYFRIPTLYTLSSGRVLSSIDARYGGTHDSKSKINIATSYSDDNGKTWSEPIFAMKFNDYEEQLVYWPRDNKLKNSQISGSASFIDSSIVEDKKSGKTILLADVMPAGIGNNNANKADSGFKEINGHYYLKLKKNGDNDFRYTVRENGVVYNETTNKPTNYTINDKYEVLEGGKSLTVEQYSVDFDSGSLRERHNGKQVPMNVFYKDSLFKVTPTNYIAMTTSQNRGESWEQFKLLPPFLGEKHNGTYLCPGQGLALKSSNRLIFATYTSGELTYLISDDSGQTWKKSSASIPFKNATAEAQMVELRDGVIRTFFRTTTGKIAYMTSRDSGETWSKVSYIDGIQQTSYGTQVSAIKYSQLIDGKEAVILSTPNSRSGRKGGQLVVGLVNKEDDSIDWKYHYDIDLPSYGYAYSAITELPNHHIGVLFEKYDSWSRNELHLSNVVQYIDLEINDLTK</sequence>
<keyword id="KW-0002">3D-structure</keyword>
<keyword id="KW-0326">Glycosidase</keyword>
<keyword id="KW-0378">Hydrolase</keyword>
<keyword id="KW-1185">Reference proteome</keyword>
<keyword id="KW-0677">Repeat</keyword>
<keyword id="KW-0732">Signal</keyword>
<protein>
    <recommendedName>
        <fullName>Sialidase B</fullName>
        <ecNumber>3.2.1.18</ecNumber>
    </recommendedName>
    <alternativeName>
        <fullName>Neuraminidase B</fullName>
    </alternativeName>
</protein>
<proteinExistence type="evidence at protein level"/>
<reference key="1">
    <citation type="journal article" date="1996" name="J. Bacteriol.">
        <title>Cloning and characterization of nanB, a second Streptococcus pneumoniae neuraminidase gene, and purification of the NanB enzyme from recombinant Escherichia coli.</title>
        <authorList>
            <person name="Berry A.M."/>
            <person name="Lock R.A."/>
            <person name="Paton J.C."/>
        </authorList>
    </citation>
    <scope>NUCLEOTIDE SEQUENCE [GENOMIC DNA]</scope>
    <source>
        <strain>Serotype 6</strain>
    </source>
</reference>
<reference key="2">
    <citation type="journal article" date="2001" name="Science">
        <title>Complete genome sequence of a virulent isolate of Streptococcus pneumoniae.</title>
        <authorList>
            <person name="Tettelin H."/>
            <person name="Nelson K.E."/>
            <person name="Paulsen I.T."/>
            <person name="Eisen J.A."/>
            <person name="Read T.D."/>
            <person name="Peterson S.N."/>
            <person name="Heidelberg J.F."/>
            <person name="DeBoy R.T."/>
            <person name="Haft D.H."/>
            <person name="Dodson R.J."/>
            <person name="Durkin A.S."/>
            <person name="Gwinn M.L."/>
            <person name="Kolonay J.F."/>
            <person name="Nelson W.C."/>
            <person name="Peterson J.D."/>
            <person name="Umayam L.A."/>
            <person name="White O."/>
            <person name="Salzberg S.L."/>
            <person name="Lewis M.R."/>
            <person name="Radune D."/>
            <person name="Holtzapple E.K."/>
            <person name="Khouri H.M."/>
            <person name="Wolf A.M."/>
            <person name="Utterback T.R."/>
            <person name="Hansen C.L."/>
            <person name="McDonald L.A."/>
            <person name="Feldblyum T.V."/>
            <person name="Angiuoli S.V."/>
            <person name="Dickinson T."/>
            <person name="Hickey E.K."/>
            <person name="Holt I.E."/>
            <person name="Loftus B.J."/>
            <person name="Yang F."/>
            <person name="Smith H.O."/>
            <person name="Venter J.C."/>
            <person name="Dougherty B.A."/>
            <person name="Morrison D.A."/>
            <person name="Hollingshead S.K."/>
            <person name="Fraser C.M."/>
        </authorList>
    </citation>
    <scope>NUCLEOTIDE SEQUENCE [LARGE SCALE GENOMIC DNA]</scope>
    <source>
        <strain>ATCC BAA-334 / TIGR4</strain>
    </source>
</reference>
<gene>
    <name type="primary">nanB</name>
    <name type="ordered locus">SP_1687</name>
</gene>
<name>NANB_STRPN</name>